<name>DAPD_NITOC</name>
<sequence>MNDSQAIIEEAFERRAEISPRKAETLVKDAVEEALHLLDTGEARVAEKQNGEWIVNEWLKKAVLLSFRLSDNVFIKGGYTNYFDKVPSKYADYSSRDFRQDEVRIVPPASVRKGAFIAPSVVLMPSYVNIGAYVDRGTMVDTWATVGSCAQIGKNVHLSGGVGIGGVLEPLQAKPTIIEDNCFIGARSEIVEGVIVEEGSVISMGVFIGQSTRIYHRETGTISYGRVPAGSVVVPGNLPSQDGKYSLYCAIIVKQVDERTRSKVGINELLRNI</sequence>
<gene>
    <name evidence="1" type="primary">dapD</name>
    <name type="ordered locus">Noc_2125</name>
</gene>
<organism>
    <name type="scientific">Nitrosococcus oceani (strain ATCC 19707 / BCRC 17464 / JCM 30415 / NCIMB 11848 / C-107)</name>
    <dbReference type="NCBI Taxonomy" id="323261"/>
    <lineage>
        <taxon>Bacteria</taxon>
        <taxon>Pseudomonadati</taxon>
        <taxon>Pseudomonadota</taxon>
        <taxon>Gammaproteobacteria</taxon>
        <taxon>Chromatiales</taxon>
        <taxon>Chromatiaceae</taxon>
        <taxon>Nitrosococcus</taxon>
    </lineage>
</organism>
<keyword id="KW-0012">Acyltransferase</keyword>
<keyword id="KW-0028">Amino-acid biosynthesis</keyword>
<keyword id="KW-0963">Cytoplasm</keyword>
<keyword id="KW-0220">Diaminopimelate biosynthesis</keyword>
<keyword id="KW-0457">Lysine biosynthesis</keyword>
<keyword id="KW-1185">Reference proteome</keyword>
<keyword id="KW-0677">Repeat</keyword>
<keyword id="KW-0808">Transferase</keyword>
<feature type="chain" id="PRO_1000047157" description="2,3,4,5-tetrahydropyridine-2,6-dicarboxylate N-succinyltransferase">
    <location>
        <begin position="1"/>
        <end position="273"/>
    </location>
</feature>
<feature type="binding site" evidence="1">
    <location>
        <position position="104"/>
    </location>
    <ligand>
        <name>substrate</name>
    </ligand>
</feature>
<feature type="binding site" evidence="1">
    <location>
        <position position="141"/>
    </location>
    <ligand>
        <name>substrate</name>
    </ligand>
</feature>
<accession>Q3J9B1</accession>
<protein>
    <recommendedName>
        <fullName evidence="1">2,3,4,5-tetrahydropyridine-2,6-dicarboxylate N-succinyltransferase</fullName>
        <ecNumber evidence="1">2.3.1.117</ecNumber>
    </recommendedName>
    <alternativeName>
        <fullName evidence="1">Tetrahydrodipicolinate N-succinyltransferase</fullName>
        <shortName evidence="1">THDP succinyltransferase</shortName>
        <shortName evidence="1">THP succinyltransferase</shortName>
        <shortName evidence="1">Tetrahydropicolinate succinylase</shortName>
    </alternativeName>
</protein>
<evidence type="ECO:0000255" key="1">
    <source>
        <dbReference type="HAMAP-Rule" id="MF_00811"/>
    </source>
</evidence>
<comment type="catalytic activity">
    <reaction evidence="1">
        <text>(S)-2,3,4,5-tetrahydrodipicolinate + succinyl-CoA + H2O = (S)-2-succinylamino-6-oxoheptanedioate + CoA</text>
        <dbReference type="Rhea" id="RHEA:17325"/>
        <dbReference type="ChEBI" id="CHEBI:15377"/>
        <dbReference type="ChEBI" id="CHEBI:15685"/>
        <dbReference type="ChEBI" id="CHEBI:16845"/>
        <dbReference type="ChEBI" id="CHEBI:57287"/>
        <dbReference type="ChEBI" id="CHEBI:57292"/>
        <dbReference type="EC" id="2.3.1.117"/>
    </reaction>
</comment>
<comment type="pathway">
    <text evidence="1">Amino-acid biosynthesis; L-lysine biosynthesis via DAP pathway; LL-2,6-diaminopimelate from (S)-tetrahydrodipicolinate (succinylase route): step 1/3.</text>
</comment>
<comment type="subunit">
    <text evidence="1">Homotrimer.</text>
</comment>
<comment type="subcellular location">
    <subcellularLocation>
        <location evidence="1">Cytoplasm</location>
    </subcellularLocation>
</comment>
<comment type="similarity">
    <text evidence="1">Belongs to the transferase hexapeptide repeat family.</text>
</comment>
<proteinExistence type="inferred from homology"/>
<dbReference type="EC" id="2.3.1.117" evidence="1"/>
<dbReference type="EMBL" id="CP000127">
    <property type="protein sequence ID" value="ABA58585.1"/>
    <property type="molecule type" value="Genomic_DNA"/>
</dbReference>
<dbReference type="RefSeq" id="WP_002811322.1">
    <property type="nucleotide sequence ID" value="NC_007484.1"/>
</dbReference>
<dbReference type="SMR" id="Q3J9B1"/>
<dbReference type="FunCoup" id="Q3J9B1">
    <property type="interactions" value="248"/>
</dbReference>
<dbReference type="STRING" id="323261.Noc_2125"/>
<dbReference type="KEGG" id="noc:Noc_2125"/>
<dbReference type="eggNOG" id="COG2171">
    <property type="taxonomic scope" value="Bacteria"/>
</dbReference>
<dbReference type="HOGENOM" id="CLU_050859_0_1_6"/>
<dbReference type="InParanoid" id="Q3J9B1"/>
<dbReference type="UniPathway" id="UPA00034">
    <property type="reaction ID" value="UER00019"/>
</dbReference>
<dbReference type="Proteomes" id="UP000006838">
    <property type="component" value="Chromosome"/>
</dbReference>
<dbReference type="GO" id="GO:0005737">
    <property type="term" value="C:cytoplasm"/>
    <property type="evidence" value="ECO:0007669"/>
    <property type="project" value="UniProtKB-SubCell"/>
</dbReference>
<dbReference type="GO" id="GO:0008666">
    <property type="term" value="F:2,3,4,5-tetrahydropyridine-2,6-dicarboxylate N-succinyltransferase activity"/>
    <property type="evidence" value="ECO:0007669"/>
    <property type="project" value="UniProtKB-UniRule"/>
</dbReference>
<dbReference type="GO" id="GO:0016779">
    <property type="term" value="F:nucleotidyltransferase activity"/>
    <property type="evidence" value="ECO:0007669"/>
    <property type="project" value="TreeGrafter"/>
</dbReference>
<dbReference type="GO" id="GO:0019877">
    <property type="term" value="P:diaminopimelate biosynthetic process"/>
    <property type="evidence" value="ECO:0007669"/>
    <property type="project" value="UniProtKB-UniRule"/>
</dbReference>
<dbReference type="GO" id="GO:0009089">
    <property type="term" value="P:lysine biosynthetic process via diaminopimelate"/>
    <property type="evidence" value="ECO:0007669"/>
    <property type="project" value="UniProtKB-UniRule"/>
</dbReference>
<dbReference type="CDD" id="cd03350">
    <property type="entry name" value="LbH_THP_succinylT"/>
    <property type="match status" value="1"/>
</dbReference>
<dbReference type="Gene3D" id="2.160.10.10">
    <property type="entry name" value="Hexapeptide repeat proteins"/>
    <property type="match status" value="1"/>
</dbReference>
<dbReference type="Gene3D" id="1.10.166.10">
    <property type="entry name" value="Tetrahydrodipicolinate-N-succinyltransferase, N-terminal domain"/>
    <property type="match status" value="1"/>
</dbReference>
<dbReference type="HAMAP" id="MF_00811">
    <property type="entry name" value="DapD"/>
    <property type="match status" value="1"/>
</dbReference>
<dbReference type="InterPro" id="IPR005664">
    <property type="entry name" value="DapD_Trfase_Hexpep_rpt_fam"/>
</dbReference>
<dbReference type="InterPro" id="IPR001451">
    <property type="entry name" value="Hexapep"/>
</dbReference>
<dbReference type="InterPro" id="IPR018357">
    <property type="entry name" value="Hexapep_transf_CS"/>
</dbReference>
<dbReference type="InterPro" id="IPR023180">
    <property type="entry name" value="THP_succinylTrfase_dom1"/>
</dbReference>
<dbReference type="InterPro" id="IPR037133">
    <property type="entry name" value="THP_succinylTrfase_N_sf"/>
</dbReference>
<dbReference type="InterPro" id="IPR011004">
    <property type="entry name" value="Trimer_LpxA-like_sf"/>
</dbReference>
<dbReference type="NCBIfam" id="TIGR00965">
    <property type="entry name" value="dapD"/>
    <property type="match status" value="1"/>
</dbReference>
<dbReference type="NCBIfam" id="NF008808">
    <property type="entry name" value="PRK11830.1"/>
    <property type="match status" value="1"/>
</dbReference>
<dbReference type="PANTHER" id="PTHR19136:SF52">
    <property type="entry name" value="2,3,4,5-TETRAHYDROPYRIDINE-2,6-DICARBOXYLATE N-SUCCINYLTRANSFERASE"/>
    <property type="match status" value="1"/>
</dbReference>
<dbReference type="PANTHER" id="PTHR19136">
    <property type="entry name" value="MOLYBDENUM COFACTOR GUANYLYLTRANSFERASE"/>
    <property type="match status" value="1"/>
</dbReference>
<dbReference type="Pfam" id="PF14602">
    <property type="entry name" value="Hexapep_2"/>
    <property type="match status" value="1"/>
</dbReference>
<dbReference type="Pfam" id="PF14805">
    <property type="entry name" value="THDPS_N_2"/>
    <property type="match status" value="1"/>
</dbReference>
<dbReference type="SUPFAM" id="SSF51161">
    <property type="entry name" value="Trimeric LpxA-like enzymes"/>
    <property type="match status" value="1"/>
</dbReference>
<dbReference type="PROSITE" id="PS00101">
    <property type="entry name" value="HEXAPEP_TRANSFERASES"/>
    <property type="match status" value="1"/>
</dbReference>
<reference key="1">
    <citation type="journal article" date="2006" name="Appl. Environ. Microbiol.">
        <title>Complete genome sequence of the marine, chemolithoautotrophic, ammonia-oxidizing bacterium Nitrosococcus oceani ATCC 19707.</title>
        <authorList>
            <person name="Klotz M.G."/>
            <person name="Arp D.J."/>
            <person name="Chain P.S.G."/>
            <person name="El-Sheikh A.F."/>
            <person name="Hauser L.J."/>
            <person name="Hommes N.G."/>
            <person name="Larimer F.W."/>
            <person name="Malfatti S.A."/>
            <person name="Norton J.M."/>
            <person name="Poret-Peterson A.T."/>
            <person name="Vergez L.M."/>
            <person name="Ward B.B."/>
        </authorList>
    </citation>
    <scope>NUCLEOTIDE SEQUENCE [LARGE SCALE GENOMIC DNA]</scope>
    <source>
        <strain>ATCC 19707 / BCRC 17464 / JCM 30415 / NCIMB 11848 / C-107</strain>
    </source>
</reference>